<evidence type="ECO:0000255" key="1">
    <source>
        <dbReference type="HAMAP-Rule" id="MF_00286"/>
    </source>
</evidence>
<proteinExistence type="inferred from homology"/>
<organism>
    <name type="scientific">Pseudomonas aeruginosa (strain UCBPP-PA14)</name>
    <dbReference type="NCBI Taxonomy" id="208963"/>
    <lineage>
        <taxon>Bacteria</taxon>
        <taxon>Pseudomonadati</taxon>
        <taxon>Pseudomonadota</taxon>
        <taxon>Gammaproteobacteria</taxon>
        <taxon>Pseudomonadales</taxon>
        <taxon>Pseudomonadaceae</taxon>
        <taxon>Pseudomonas</taxon>
    </lineage>
</organism>
<protein>
    <recommendedName>
        <fullName evidence="1">Disulfide bond formation protein B 2</fullName>
    </recommendedName>
    <alternativeName>
        <fullName evidence="1">Disulfide oxidoreductase 2</fullName>
    </alternativeName>
</protein>
<comment type="function">
    <text evidence="1">Required for disulfide bond formation in some periplasmic proteins. Acts by oxidizing the DsbA protein.</text>
</comment>
<comment type="subcellular location">
    <subcellularLocation>
        <location evidence="1">Cell inner membrane</location>
        <topology evidence="1">Multi-pass membrane protein</topology>
    </subcellularLocation>
</comment>
<comment type="similarity">
    <text evidence="1">Belongs to the DsbB family.</text>
</comment>
<feature type="chain" id="PRO_0000298384" description="Disulfide bond formation protein B 2">
    <location>
        <begin position="1"/>
        <end position="163"/>
    </location>
</feature>
<feature type="topological domain" description="Cytoplasmic" evidence="1">
    <location>
        <begin position="1"/>
        <end position="9"/>
    </location>
</feature>
<feature type="transmembrane region" description="Helical" evidence="1">
    <location>
        <begin position="10"/>
        <end position="26"/>
    </location>
</feature>
<feature type="topological domain" description="Periplasmic" evidence="1">
    <location>
        <begin position="27"/>
        <end position="44"/>
    </location>
</feature>
<feature type="transmembrane region" description="Helical" evidence="1">
    <location>
        <begin position="45"/>
        <end position="61"/>
    </location>
</feature>
<feature type="topological domain" description="Cytoplasmic" evidence="1">
    <location>
        <begin position="62"/>
        <end position="67"/>
    </location>
</feature>
<feature type="transmembrane region" description="Helical" evidence="1">
    <location>
        <begin position="68"/>
        <end position="85"/>
    </location>
</feature>
<feature type="topological domain" description="Periplasmic" evidence="1">
    <location>
        <begin position="86"/>
        <end position="142"/>
    </location>
</feature>
<feature type="transmembrane region" description="Helical" evidence="1">
    <location>
        <begin position="143"/>
        <end position="161"/>
    </location>
</feature>
<feature type="topological domain" description="Cytoplasmic" evidence="1">
    <location>
        <begin position="162"/>
        <end position="163"/>
    </location>
</feature>
<feature type="disulfide bond" description="Redox-active" evidence="1">
    <location>
        <begin position="36"/>
        <end position="39"/>
    </location>
</feature>
<feature type="disulfide bond" description="Redox-active" evidence="1">
    <location>
        <begin position="101"/>
        <end position="128"/>
    </location>
</feature>
<accession>Q02EA7</accession>
<dbReference type="EMBL" id="CP000438">
    <property type="protein sequence ID" value="ABJ14640.1"/>
    <property type="molecule type" value="Genomic_DNA"/>
</dbReference>
<dbReference type="RefSeq" id="WP_003099230.1">
    <property type="nucleotide sequence ID" value="NZ_CP034244.1"/>
</dbReference>
<dbReference type="SMR" id="Q02EA7"/>
<dbReference type="KEGG" id="pau:PA14_69400"/>
<dbReference type="PseudoCAP" id="PA14_69400"/>
<dbReference type="HOGENOM" id="CLU_098660_1_1_6"/>
<dbReference type="BioCyc" id="PAER208963:G1G74-5847-MONOMER"/>
<dbReference type="Proteomes" id="UP000000653">
    <property type="component" value="Chromosome"/>
</dbReference>
<dbReference type="GO" id="GO:0005886">
    <property type="term" value="C:plasma membrane"/>
    <property type="evidence" value="ECO:0007669"/>
    <property type="project" value="UniProtKB-SubCell"/>
</dbReference>
<dbReference type="GO" id="GO:0009055">
    <property type="term" value="F:electron transfer activity"/>
    <property type="evidence" value="ECO:0007669"/>
    <property type="project" value="UniProtKB-UniRule"/>
</dbReference>
<dbReference type="GO" id="GO:0015035">
    <property type="term" value="F:protein-disulfide reductase activity"/>
    <property type="evidence" value="ECO:0007669"/>
    <property type="project" value="UniProtKB-UniRule"/>
</dbReference>
<dbReference type="GO" id="GO:0006457">
    <property type="term" value="P:protein folding"/>
    <property type="evidence" value="ECO:0007669"/>
    <property type="project" value="InterPro"/>
</dbReference>
<dbReference type="Gene3D" id="1.20.1550.10">
    <property type="entry name" value="DsbB-like"/>
    <property type="match status" value="1"/>
</dbReference>
<dbReference type="HAMAP" id="MF_00286">
    <property type="entry name" value="DsbB"/>
    <property type="match status" value="1"/>
</dbReference>
<dbReference type="InterPro" id="IPR003752">
    <property type="entry name" value="DiS_bond_form_DsbB/BdbC"/>
</dbReference>
<dbReference type="InterPro" id="IPR022920">
    <property type="entry name" value="Disulphide_bond_form_DsbB"/>
</dbReference>
<dbReference type="InterPro" id="IPR050183">
    <property type="entry name" value="DsbB"/>
</dbReference>
<dbReference type="InterPro" id="IPR023380">
    <property type="entry name" value="DsbB-like_sf"/>
</dbReference>
<dbReference type="PANTHER" id="PTHR36570">
    <property type="entry name" value="DISULFIDE BOND FORMATION PROTEIN B"/>
    <property type="match status" value="1"/>
</dbReference>
<dbReference type="PANTHER" id="PTHR36570:SF3">
    <property type="entry name" value="DISULFIDE BOND FORMATION PROTEIN B"/>
    <property type="match status" value="1"/>
</dbReference>
<dbReference type="Pfam" id="PF02600">
    <property type="entry name" value="DsbB"/>
    <property type="match status" value="1"/>
</dbReference>
<dbReference type="SUPFAM" id="SSF158442">
    <property type="entry name" value="DsbB-like"/>
    <property type="match status" value="1"/>
</dbReference>
<name>DSBB2_PSEAB</name>
<reference key="1">
    <citation type="journal article" date="2006" name="Genome Biol.">
        <title>Genomic analysis reveals that Pseudomonas aeruginosa virulence is combinatorial.</title>
        <authorList>
            <person name="Lee D.G."/>
            <person name="Urbach J.M."/>
            <person name="Wu G."/>
            <person name="Liberati N.T."/>
            <person name="Feinbaum R.L."/>
            <person name="Miyata S."/>
            <person name="Diggins L.T."/>
            <person name="He J."/>
            <person name="Saucier M."/>
            <person name="Deziel E."/>
            <person name="Friedman L."/>
            <person name="Li L."/>
            <person name="Grills G."/>
            <person name="Montgomery K."/>
            <person name="Kucherlapati R."/>
            <person name="Rahme L.G."/>
            <person name="Ausubel F.M."/>
        </authorList>
    </citation>
    <scope>NUCLEOTIDE SEQUENCE [LARGE SCALE GENOMIC DNA]</scope>
    <source>
        <strain>UCBPP-PA14</strain>
    </source>
</reference>
<gene>
    <name evidence="1" type="primary">dsbB2</name>
    <name type="ordered locus">PA14_69400</name>
</gene>
<sequence length="163" mass="17764">MPLASPRQLFLLAFLACVAIMGGALYLEHVVGLEACPLCVVQRIFFILIGLTCLAGAIQGPGLRGRRIYSVLVFLLALGGGATAARQVWLQTVPLDQLPACLPSLDYMMQALPFQEVIRLVLHGTADCAQVSWTLFTLSIPEWSLLAFVAYLGFSIVQFLRRA</sequence>
<keyword id="KW-0997">Cell inner membrane</keyword>
<keyword id="KW-1003">Cell membrane</keyword>
<keyword id="KW-0143">Chaperone</keyword>
<keyword id="KW-1015">Disulfide bond</keyword>
<keyword id="KW-0249">Electron transport</keyword>
<keyword id="KW-0472">Membrane</keyword>
<keyword id="KW-0560">Oxidoreductase</keyword>
<keyword id="KW-0676">Redox-active center</keyword>
<keyword id="KW-0812">Transmembrane</keyword>
<keyword id="KW-1133">Transmembrane helix</keyword>
<keyword id="KW-0813">Transport</keyword>